<comment type="function">
    <text evidence="3 4 5 6 7">Member of the two-component regulatory system GraR/GraS involved in resistance against cationic antimicrobial peptides (CAMPs) (PubMed:17502406). Upon phosphorylation by GraS, functions as a transcription regulator by direct binding to promoter regions of target genes such as adhesins, exoproteins, transporters, toxins, and proteins involved in cell wall synthesis. Down-regulates the expression of many genes involved in RNA and amino acid synthesis or glycolysis (PubMed:17676995, PubMed:18518949, PubMed:24102310, PubMed:25685323).</text>
</comment>
<comment type="subunit">
    <text evidence="7">Interacts with GraX.</text>
</comment>
<comment type="subcellular location">
    <subcellularLocation>
        <location evidence="9">Cytoplasm</location>
    </subcellularLocation>
</comment>
<comment type="PTM">
    <text evidence="6">Phosphorylated by GraS. Phosphorylated by Stk1; phosphorylation increases the DNA-binding activity of GraR.</text>
</comment>
<comment type="disruption phenotype">
    <text evidence="6">Decreases the resistance to vancomycin about 2-fold.</text>
</comment>
<protein>
    <recommendedName>
        <fullName evidence="8">Response regulator protein GraR</fullName>
    </recommendedName>
    <alternativeName>
        <fullName>Glycopeptide resistance-associated protein R</fullName>
    </alternativeName>
</protein>
<evidence type="ECO:0000255" key="1">
    <source>
        <dbReference type="PROSITE-ProRule" id="PRU00169"/>
    </source>
</evidence>
<evidence type="ECO:0000255" key="2">
    <source>
        <dbReference type="PROSITE-ProRule" id="PRU01091"/>
    </source>
</evidence>
<evidence type="ECO:0000269" key="3">
    <source>
    </source>
</evidence>
<evidence type="ECO:0000269" key="4">
    <source>
    </source>
</evidence>
<evidence type="ECO:0000269" key="5">
    <source>
    </source>
</evidence>
<evidence type="ECO:0000269" key="6">
    <source>
    </source>
</evidence>
<evidence type="ECO:0000269" key="7">
    <source>
    </source>
</evidence>
<evidence type="ECO:0000303" key="8">
    <source>
    </source>
</evidence>
<evidence type="ECO:0000305" key="9"/>
<accession>Q2G0E0</accession>
<dbReference type="EMBL" id="CP000253">
    <property type="protein sequence ID" value="ABD29798.1"/>
    <property type="molecule type" value="Genomic_DNA"/>
</dbReference>
<dbReference type="RefSeq" id="WP_001166505.1">
    <property type="nucleotide sequence ID" value="NZ_LS483365.1"/>
</dbReference>
<dbReference type="RefSeq" id="YP_499224.1">
    <property type="nucleotide sequence ID" value="NC_007795.1"/>
</dbReference>
<dbReference type="SMR" id="Q2G0E0"/>
<dbReference type="STRING" id="93061.SAOUHSC_00665"/>
<dbReference type="iPTMnet" id="Q2G0E0"/>
<dbReference type="PaxDb" id="1280-SAXN108_0726"/>
<dbReference type="GeneID" id="3919955"/>
<dbReference type="KEGG" id="sao:SAOUHSC_00665"/>
<dbReference type="PATRIC" id="fig|93061.5.peg.596"/>
<dbReference type="eggNOG" id="COG0745">
    <property type="taxonomic scope" value="Bacteria"/>
</dbReference>
<dbReference type="HOGENOM" id="CLU_000445_30_3_9"/>
<dbReference type="OrthoDB" id="9790442at2"/>
<dbReference type="PRO" id="PR:Q2G0E0"/>
<dbReference type="Proteomes" id="UP000008816">
    <property type="component" value="Chromosome"/>
</dbReference>
<dbReference type="GO" id="GO:0005829">
    <property type="term" value="C:cytosol"/>
    <property type="evidence" value="ECO:0000318"/>
    <property type="project" value="GO_Central"/>
</dbReference>
<dbReference type="GO" id="GO:0032993">
    <property type="term" value="C:protein-DNA complex"/>
    <property type="evidence" value="ECO:0000318"/>
    <property type="project" value="GO_Central"/>
</dbReference>
<dbReference type="GO" id="GO:0000156">
    <property type="term" value="F:phosphorelay response regulator activity"/>
    <property type="evidence" value="ECO:0000318"/>
    <property type="project" value="GO_Central"/>
</dbReference>
<dbReference type="GO" id="GO:0000976">
    <property type="term" value="F:transcription cis-regulatory region binding"/>
    <property type="evidence" value="ECO:0000318"/>
    <property type="project" value="GO_Central"/>
</dbReference>
<dbReference type="GO" id="GO:0006355">
    <property type="term" value="P:regulation of DNA-templated transcription"/>
    <property type="evidence" value="ECO:0000318"/>
    <property type="project" value="GO_Central"/>
</dbReference>
<dbReference type="GO" id="GO:0046677">
    <property type="term" value="P:response to antibiotic"/>
    <property type="evidence" value="ECO:0007669"/>
    <property type="project" value="UniProtKB-KW"/>
</dbReference>
<dbReference type="CDD" id="cd18159">
    <property type="entry name" value="REC_OmpR_NsrR-like"/>
    <property type="match status" value="1"/>
</dbReference>
<dbReference type="CDD" id="cd00383">
    <property type="entry name" value="trans_reg_C"/>
    <property type="match status" value="1"/>
</dbReference>
<dbReference type="FunFam" id="3.40.50.2300:FF:000232">
    <property type="entry name" value="Response regulator GraR"/>
    <property type="match status" value="1"/>
</dbReference>
<dbReference type="FunFam" id="1.10.10.10:FF:000546">
    <property type="entry name" value="Two-component response regulator GraR"/>
    <property type="match status" value="1"/>
</dbReference>
<dbReference type="Gene3D" id="3.40.50.2300">
    <property type="match status" value="1"/>
</dbReference>
<dbReference type="Gene3D" id="1.10.10.10">
    <property type="entry name" value="Winged helix-like DNA-binding domain superfamily/Winged helix DNA-binding domain"/>
    <property type="match status" value="1"/>
</dbReference>
<dbReference type="InterPro" id="IPR011006">
    <property type="entry name" value="CheY-like_superfamily"/>
</dbReference>
<dbReference type="InterPro" id="IPR001867">
    <property type="entry name" value="OmpR/PhoB-type_DNA-bd"/>
</dbReference>
<dbReference type="InterPro" id="IPR016032">
    <property type="entry name" value="Sig_transdc_resp-reg_C-effctor"/>
</dbReference>
<dbReference type="InterPro" id="IPR001789">
    <property type="entry name" value="Sig_transdc_resp-reg_receiver"/>
</dbReference>
<dbReference type="InterPro" id="IPR039420">
    <property type="entry name" value="WalR-like"/>
</dbReference>
<dbReference type="InterPro" id="IPR036388">
    <property type="entry name" value="WH-like_DNA-bd_sf"/>
</dbReference>
<dbReference type="PANTHER" id="PTHR48111">
    <property type="entry name" value="REGULATOR OF RPOS"/>
    <property type="match status" value="1"/>
</dbReference>
<dbReference type="PANTHER" id="PTHR48111:SF27">
    <property type="entry name" value="SENSORY TRANSDUCTION PROTEIN BCER"/>
    <property type="match status" value="1"/>
</dbReference>
<dbReference type="Pfam" id="PF00072">
    <property type="entry name" value="Response_reg"/>
    <property type="match status" value="1"/>
</dbReference>
<dbReference type="Pfam" id="PF00486">
    <property type="entry name" value="Trans_reg_C"/>
    <property type="match status" value="1"/>
</dbReference>
<dbReference type="SMART" id="SM00448">
    <property type="entry name" value="REC"/>
    <property type="match status" value="1"/>
</dbReference>
<dbReference type="SMART" id="SM00862">
    <property type="entry name" value="Trans_reg_C"/>
    <property type="match status" value="1"/>
</dbReference>
<dbReference type="SUPFAM" id="SSF46894">
    <property type="entry name" value="C-terminal effector domain of the bipartite response regulators"/>
    <property type="match status" value="1"/>
</dbReference>
<dbReference type="SUPFAM" id="SSF52172">
    <property type="entry name" value="CheY-like"/>
    <property type="match status" value="1"/>
</dbReference>
<dbReference type="PROSITE" id="PS51755">
    <property type="entry name" value="OMPR_PHOB"/>
    <property type="match status" value="1"/>
</dbReference>
<dbReference type="PROSITE" id="PS50110">
    <property type="entry name" value="RESPONSE_REGULATORY"/>
    <property type="match status" value="1"/>
</dbReference>
<keyword id="KW-0010">Activator</keyword>
<keyword id="KW-0046">Antibiotic resistance</keyword>
<keyword id="KW-0963">Cytoplasm</keyword>
<keyword id="KW-0238">DNA-binding</keyword>
<keyword id="KW-0597">Phosphoprotein</keyword>
<keyword id="KW-1185">Reference proteome</keyword>
<keyword id="KW-0678">Repressor</keyword>
<keyword id="KW-0804">Transcription</keyword>
<keyword id="KW-0805">Transcription regulation</keyword>
<keyword id="KW-0902">Two-component regulatory system</keyword>
<keyword id="KW-0843">Virulence</keyword>
<proteinExistence type="evidence at protein level"/>
<gene>
    <name evidence="8" type="primary">graR</name>
    <name type="ordered locus">SAOUHSC_00665</name>
</gene>
<name>GRAR_STAA8</name>
<reference key="1">
    <citation type="book" date="2006" name="Gram positive pathogens, 2nd edition">
        <title>The Staphylococcus aureus NCTC 8325 genome.</title>
        <editorList>
            <person name="Fischetti V."/>
            <person name="Novick R."/>
            <person name="Ferretti J."/>
            <person name="Portnoy D."/>
            <person name="Rood J."/>
        </editorList>
        <authorList>
            <person name="Gillaspy A.F."/>
            <person name="Worrell V."/>
            <person name="Orvis J."/>
            <person name="Roe B.A."/>
            <person name="Dyer D.W."/>
            <person name="Iandolo J.J."/>
        </authorList>
    </citation>
    <scope>NUCLEOTIDE SEQUENCE [LARGE SCALE GENOMIC DNA]</scope>
    <source>
        <strain>NCTC 8325 / PS 47</strain>
    </source>
</reference>
<reference key="2">
    <citation type="journal article" date="2007" name="Antimicrob. Agents Chemother.">
        <title>Interaction of the graRS two-component system with the vraFG ABC transporter to support vancomycin-intermediate resistance in Staphylococcus aureus.</title>
        <authorList>
            <person name="Meehl M."/>
            <person name="Herbert S."/>
            <person name="Goetz F."/>
            <person name="Cheung A."/>
        </authorList>
    </citation>
    <scope>FUNCTION IN CATIONIC ANTIMICROBIAL PEPTIDE RESISTANCE</scope>
</reference>
<reference key="3">
    <citation type="journal article" date="2007" name="PLoS Pathog.">
        <title>Molecular basis of resistance to muramidase and cationic antimicrobial peptide activity of lysozyme in staphylococci.</title>
        <authorList>
            <person name="Herbert S."/>
            <person name="Bera A."/>
            <person name="Nerz C."/>
            <person name="Kraus D."/>
            <person name="Peschel A."/>
            <person name="Goerke C."/>
            <person name="Meehl M."/>
            <person name="Cheung A."/>
            <person name="Goetz F."/>
        </authorList>
    </citation>
    <scope>FUNCTION AS A GLOBAL REGULATOR</scope>
</reference>
<reference key="4">
    <citation type="journal article" date="2008" name="BMC Microbiol.">
        <title>The graRS regulatory system controls Staphylococcus aureus susceptibility to antimicrobial host defenses.</title>
        <authorList>
            <person name="Kraus D."/>
            <person name="Herbert S."/>
            <person name="Kristian S.A."/>
            <person name="Khosravi A."/>
            <person name="Nizet V."/>
            <person name="Goetz F."/>
            <person name="Peschel A."/>
        </authorList>
    </citation>
    <scope>FUNCTION IN CATIONIC ANTIMICROBIAL PEPTIDE RESISTANCE</scope>
</reference>
<reference key="5">
    <citation type="journal article" date="2013" name="Biochemistry">
        <title>Two unique phosphorylation-driven signaling pathways crosstalk in Staphylococcus aureus to modulate the cell-wall charge: Stk1/Stp1 meets GraSR.</title>
        <authorList>
            <person name="Fridman M."/>
            <person name="Williams G.D."/>
            <person name="Muzamal U."/>
            <person name="Hunter H."/>
            <person name="Siu K.W."/>
            <person name="Golemi-Kotra D."/>
        </authorList>
    </citation>
    <scope>FUNCTION</scope>
    <scope>PHOSPHORYLATION AT THR-128; THR-130 AND THR-149</scope>
    <scope>DISRUPTION PHENOTYPE</scope>
</reference>
<reference key="6">
    <citation type="journal article" date="2014" name="F1000Research">
        <title>Diversity of two-component systems: insights into the signal transduction mechanism by the Staphylococcus aureus two-component system GraSR.</title>
        <authorList>
            <person name="Muzamal U."/>
            <person name="Gomez D."/>
            <person name="Kapadia F."/>
            <person name="Golemi-Kotra D."/>
        </authorList>
    </citation>
    <scope>FUNCTION</scope>
    <scope>INTERACTION WITH GRAX</scope>
</reference>
<organism>
    <name type="scientific">Staphylococcus aureus (strain NCTC 8325 / PS 47)</name>
    <dbReference type="NCBI Taxonomy" id="93061"/>
    <lineage>
        <taxon>Bacteria</taxon>
        <taxon>Bacillati</taxon>
        <taxon>Bacillota</taxon>
        <taxon>Bacilli</taxon>
        <taxon>Bacillales</taxon>
        <taxon>Staphylococcaceae</taxon>
        <taxon>Staphylococcus</taxon>
    </lineage>
</organism>
<feature type="chain" id="PRO_0000347905" description="Response regulator protein GraR">
    <location>
        <begin position="1"/>
        <end position="224"/>
    </location>
</feature>
<feature type="domain" description="Response regulatory" evidence="1">
    <location>
        <begin position="2"/>
        <end position="115"/>
    </location>
</feature>
<feature type="DNA-binding region" description="OmpR/PhoB-type" evidence="2">
    <location>
        <begin position="126"/>
        <end position="224"/>
    </location>
</feature>
<feature type="modified residue" description="4-aspartylphosphate" evidence="1">
    <location>
        <position position="51"/>
    </location>
</feature>
<feature type="modified residue" description="Phosphothreonine" evidence="6">
    <location>
        <position position="128"/>
    </location>
</feature>
<feature type="modified residue" description="Phosphothreonine" evidence="6">
    <location>
        <position position="130"/>
    </location>
</feature>
<feature type="modified residue" description="Phosphothreonine" evidence="6">
    <location>
        <position position="149"/>
    </location>
</feature>
<sequence>MQILLVEDDNTLFQELKKELEQWDFNVAGIEDFGKVMDTFESFNPEIVILDVQLPKYDGFYWCRKMREVSNVPILFLSSRDNPMDQVMSMELGADDYMQKPFYTNVLIAKLQAIYRRVYEFTAEEKRTLTWQDAVVDLSKDSIQKGDQTIFLSKTEMIILEILITKKNQIVSRDTIITALWDDEAFVSDNTLTVNVNRLRKKLSEISMDSAIETKVGKGYMAHE</sequence>